<comment type="function">
    <text evidence="1">Forms pores that allow passive diffusion of small molecules across the outer membrane.</text>
</comment>
<comment type="subunit">
    <text evidence="1">Homotrimer.</text>
</comment>
<comment type="subcellular location">
    <subcellularLocation>
        <location evidence="2">Cell outer membrane</location>
        <topology evidence="2">Multi-pass membrane protein</topology>
    </subcellularLocation>
</comment>
<comment type="induction">
    <text>In response to elevated hydrostatic pressure.</text>
</comment>
<comment type="similarity">
    <text evidence="2">Belongs to the Gram-negative porin family.</text>
</comment>
<name>OMPL_PHOPR</name>
<protein>
    <recommendedName>
        <fullName>Porin-like protein L</fullName>
    </recommendedName>
</protein>
<gene>
    <name type="primary">ompL</name>
    <name type="ordered locus">PBPRA0600</name>
</gene>
<feature type="signal peptide">
    <location>
        <begin position="1"/>
        <end position="21"/>
    </location>
</feature>
<feature type="chain" id="PRO_0000025287" description="Porin-like protein L">
    <location>
        <begin position="22"/>
        <end position="341"/>
    </location>
</feature>
<keyword id="KW-0998">Cell outer membrane</keyword>
<keyword id="KW-0406">Ion transport</keyword>
<keyword id="KW-0472">Membrane</keyword>
<keyword id="KW-0626">Porin</keyword>
<keyword id="KW-1185">Reference proteome</keyword>
<keyword id="KW-0732">Signal</keyword>
<keyword id="KW-0812">Transmembrane</keyword>
<keyword id="KW-1134">Transmembrane beta strand</keyword>
<keyword id="KW-0813">Transport</keyword>
<sequence length="341" mass="36673">MNKKLIALAVAAASISSVATAAEVYSDETSSLAVGGRFEARAVLADVNKDENVTNTASSEVSDKSRVRINVAGKTDITEDFYGVGFFEKEFSSADSDNDETRYAYAGVGSQYGQLVYGKADGSLGMLTDFTDIMAYHGNEAGNKLAAADRTDNNLSYVGSFDLNGDNLTVKANYVFGGSDENEGYSAAAMYAMDMGLGFGAGYGEQDGQSSKNGNEDKTGKQAFGAISYTISDFYFSGLYQDSRNTVVNNDLIDESTGYEFAAAYTYGKAVFITTYNFLEDSNASGDASDLRDSIAIDGTYYFNKNFRTYASYKFNLLDANSSTTKAQASDEFVLGARYDF</sequence>
<dbReference type="EMBL" id="U59311">
    <property type="protein sequence ID" value="AAB50064.1"/>
    <property type="molecule type" value="Genomic_DNA"/>
</dbReference>
<dbReference type="EMBL" id="CR378664">
    <property type="protein sequence ID" value="CAG19023.1"/>
    <property type="molecule type" value="Genomic_DNA"/>
</dbReference>
<dbReference type="RefSeq" id="WP_011217373.1">
    <property type="nucleotide sequence ID" value="NC_006370.1"/>
</dbReference>
<dbReference type="SMR" id="Q52581"/>
<dbReference type="STRING" id="298386.PBPRA0600"/>
<dbReference type="KEGG" id="ppr:PBPRA0600"/>
<dbReference type="eggNOG" id="COG3203">
    <property type="taxonomic scope" value="Bacteria"/>
</dbReference>
<dbReference type="HOGENOM" id="CLU_058202_1_2_6"/>
<dbReference type="Proteomes" id="UP000000593">
    <property type="component" value="Chromosome 1"/>
</dbReference>
<dbReference type="GO" id="GO:0009279">
    <property type="term" value="C:cell outer membrane"/>
    <property type="evidence" value="ECO:0007669"/>
    <property type="project" value="UniProtKB-SubCell"/>
</dbReference>
<dbReference type="GO" id="GO:0046930">
    <property type="term" value="C:pore complex"/>
    <property type="evidence" value="ECO:0007669"/>
    <property type="project" value="UniProtKB-KW"/>
</dbReference>
<dbReference type="GO" id="GO:0015288">
    <property type="term" value="F:porin activity"/>
    <property type="evidence" value="ECO:0007669"/>
    <property type="project" value="UniProtKB-KW"/>
</dbReference>
<dbReference type="GO" id="GO:0006811">
    <property type="term" value="P:monoatomic ion transport"/>
    <property type="evidence" value="ECO:0007669"/>
    <property type="project" value="UniProtKB-KW"/>
</dbReference>
<dbReference type="CDD" id="cd00342">
    <property type="entry name" value="gram_neg_porins"/>
    <property type="match status" value="1"/>
</dbReference>
<dbReference type="Gene3D" id="2.40.160.10">
    <property type="entry name" value="Porin"/>
    <property type="match status" value="1"/>
</dbReference>
<dbReference type="InterPro" id="IPR050298">
    <property type="entry name" value="Gram-neg_bact_OMP"/>
</dbReference>
<dbReference type="InterPro" id="IPR033900">
    <property type="entry name" value="Gram_neg_porin_domain"/>
</dbReference>
<dbReference type="InterPro" id="IPR023614">
    <property type="entry name" value="Porin_dom_sf"/>
</dbReference>
<dbReference type="PANTHER" id="PTHR34501:SF2">
    <property type="entry name" value="OUTER MEMBRANE PORIN F-RELATED"/>
    <property type="match status" value="1"/>
</dbReference>
<dbReference type="PANTHER" id="PTHR34501">
    <property type="entry name" value="PROTEIN YDDL-RELATED"/>
    <property type="match status" value="1"/>
</dbReference>
<dbReference type="Pfam" id="PF13609">
    <property type="entry name" value="Porin_4"/>
    <property type="match status" value="1"/>
</dbReference>
<dbReference type="SUPFAM" id="SSF56935">
    <property type="entry name" value="Porins"/>
    <property type="match status" value="1"/>
</dbReference>
<evidence type="ECO:0000250" key="1"/>
<evidence type="ECO:0000305" key="2"/>
<reference key="1">
    <citation type="journal article" date="1996" name="J. Bacteriol.">
        <title>Isolation and characterization of the structural gene for OmpL, a pressure-regulated porin-like protein from the deep-sea bacterium Photobacterium species strain SS9.</title>
        <authorList>
            <person name="Welch T.J."/>
            <person name="Bartlett D.H."/>
        </authorList>
    </citation>
    <scope>NUCLEOTIDE SEQUENCE [GENOMIC DNA]</scope>
</reference>
<reference key="2">
    <citation type="journal article" date="2005" name="Science">
        <title>Life at depth: Photobacterium profundum genome sequence and expression analysis.</title>
        <authorList>
            <person name="Vezzi A."/>
            <person name="Campanaro S."/>
            <person name="D'Angelo M."/>
            <person name="Simonato F."/>
            <person name="Vitulo N."/>
            <person name="Lauro F.M."/>
            <person name="Cestaro A."/>
            <person name="Malacrida G."/>
            <person name="Simionati B."/>
            <person name="Cannata N."/>
            <person name="Romualdi C."/>
            <person name="Bartlett D.H."/>
            <person name="Valle G."/>
        </authorList>
    </citation>
    <scope>NUCLEOTIDE SEQUENCE [LARGE SCALE GENOMIC DNA]</scope>
    <source>
        <strain>ATCC BAA-1253 / SS9</strain>
    </source>
</reference>
<organism>
    <name type="scientific">Photobacterium profundum (strain SS9)</name>
    <dbReference type="NCBI Taxonomy" id="298386"/>
    <lineage>
        <taxon>Bacteria</taxon>
        <taxon>Pseudomonadati</taxon>
        <taxon>Pseudomonadota</taxon>
        <taxon>Gammaproteobacteria</taxon>
        <taxon>Vibrionales</taxon>
        <taxon>Vibrionaceae</taxon>
        <taxon>Photobacterium</taxon>
    </lineage>
</organism>
<proteinExistence type="evidence at transcript level"/>
<accession>Q52581</accession>